<keyword id="KW-0150">Chloroplast</keyword>
<keyword id="KW-0934">Plastid</keyword>
<keyword id="KW-1185">Reference proteome</keyword>
<keyword id="KW-0677">Repeat</keyword>
<keyword id="KW-0809">Transit peptide</keyword>
<comment type="function">
    <text evidence="3 4">Involved in the regulation of early chloroplast development and chloroplast gene expression in a SIGF-dependent manner.</text>
</comment>
<comment type="subunit">
    <text evidence="4">Interacts (via C-terminus) with SIGF (via N-terminus).</text>
</comment>
<comment type="subcellular location">
    <subcellularLocation>
        <location evidence="3">Plastid</location>
        <location evidence="3">Chloroplast</location>
    </subcellularLocation>
</comment>
<comment type="developmental stage">
    <text evidence="3">Expressed in the early stage of development and decreased as the age and developmental state of both the plant and leaves increased.</text>
</comment>
<comment type="similarity">
    <text evidence="5">Belongs to the PPR family. P subfamily.</text>
</comment>
<comment type="sequence caution" evidence="5">
    <conflict type="erroneous gene model prediction">
        <sequence resource="EMBL-CDS" id="BAB08465"/>
    </conflict>
</comment>
<comment type="sequence caution" evidence="5">
    <conflict type="erroneous initiation">
        <sequence resource="EMBL-CDS" id="BAD95068"/>
    </conflict>
    <text>Truncated N-terminus.</text>
</comment>
<comment type="online information" name="Pentatricopeptide repeat proteins">
    <link uri="https://ppr.plantenergy.uwa.edu.au"/>
</comment>
<gene>
    <name type="primary">DG1</name>
    <name type="synonym">EMB1408</name>
    <name type="ordered locus">At5g67570</name>
    <name type="ORF">K9I9.14</name>
</gene>
<sequence length="798" mass="92059">MDASVVRFSQSPARVPPEFEPDMEKIKRRLLKYGVDPTPKILNNLRKKEIQKHNRRTKRETESEAEVYTEAQKQSMEEEARFQTLRREYKQFTRSISGKRGGDVGLMVGNPWEGIERVKLKELVSGVRREEVSAGELKKENLKELKKILEKDLRWVLDDDVDVEEFDLDKEFDPAKRWRNEGEAVRVLVDRLSGREINEKHWKFVRMMNQSGLQFTEDQMLKIVDRLGRKQSWKQASAVVHWVYSDKKRKHLRSRFVYTKLLSVLGFARRPQEALQIFNQMLGDRQLYPDMAAYHCIAVTLGQAGLLKELLKVIERMRQKPTKLTKNLRQKNWDPVLEPDLVVYNAILNACVPTLQWKAVSWVFVELRKNGLRPNGATYGLAMEVMLESGKFDRVHDFFRKMKSSGEAPKAITYKVLVRALWREGKIEEAVEAVRDMEQKGVIGTGSVYYELACCLCNNGRWCDAMLEVGRMKRLENCRPLEITFTGLIAASLNGGHVDDCMAIFQYMKDKCDPNIGTANMMLKVYGRNDMFSEAKELFEEIVSRKETHLVPNEYTYSFMLEASARSLQWEYFEHVYQTMVLSGYQMDQTKHASMLIEASRAGKWSLLEHAFDAVLEDGEIPHPLFFTELLCHATAKGDFQRAITLINTVALASFQISEEEWTDLFEEHQDWLTQDNLHKLSDHLIECDYVSEPTVSNLSKSLKSRCGSSSSSAQPLLAVDVTTQSQGEKPEEDLLLQDTTMEDDNSANGEAWEFTETELETLGLEELEIDDDEESSDSDSLSVYDILKEWEESSKKE</sequence>
<dbReference type="EMBL" id="AB013390">
    <property type="protein sequence ID" value="BAB08465.1"/>
    <property type="status" value="ALT_SEQ"/>
    <property type="molecule type" value="Genomic_DNA"/>
</dbReference>
<dbReference type="EMBL" id="CP002688">
    <property type="protein sequence ID" value="AED98361.1"/>
    <property type="molecule type" value="Genomic_DNA"/>
</dbReference>
<dbReference type="EMBL" id="AK222112">
    <property type="protein sequence ID" value="BAD95068.1"/>
    <property type="status" value="ALT_INIT"/>
    <property type="molecule type" value="mRNA"/>
</dbReference>
<dbReference type="RefSeq" id="NP_201558.3">
    <property type="nucleotide sequence ID" value="NM_126157.4"/>
</dbReference>
<dbReference type="SMR" id="Q9FJW6"/>
<dbReference type="BioGRID" id="22135">
    <property type="interactions" value="1"/>
</dbReference>
<dbReference type="FunCoup" id="Q9FJW6">
    <property type="interactions" value="1551"/>
</dbReference>
<dbReference type="STRING" id="3702.Q9FJW6"/>
<dbReference type="GlyGen" id="Q9FJW6">
    <property type="glycosylation" value="1 site"/>
</dbReference>
<dbReference type="PaxDb" id="3702-AT5G67570.1"/>
<dbReference type="ProteomicsDB" id="249332"/>
<dbReference type="EnsemblPlants" id="AT5G67570.1">
    <property type="protein sequence ID" value="AT5G67570.1"/>
    <property type="gene ID" value="AT5G67570"/>
</dbReference>
<dbReference type="GeneID" id="836893"/>
<dbReference type="Gramene" id="AT5G67570.1">
    <property type="protein sequence ID" value="AT5G67570.1"/>
    <property type="gene ID" value="AT5G67570"/>
</dbReference>
<dbReference type="KEGG" id="ath:AT5G67570"/>
<dbReference type="Araport" id="AT5G67570"/>
<dbReference type="TAIR" id="AT5G67570">
    <property type="gene designation" value="DG1"/>
</dbReference>
<dbReference type="eggNOG" id="KOG4197">
    <property type="taxonomic scope" value="Eukaryota"/>
</dbReference>
<dbReference type="HOGENOM" id="CLU_009409_1_0_1"/>
<dbReference type="InParanoid" id="Q9FJW6"/>
<dbReference type="OMA" id="WKFSRLM"/>
<dbReference type="PhylomeDB" id="Q9FJW6"/>
<dbReference type="PRO" id="PR:Q9FJW6"/>
<dbReference type="Proteomes" id="UP000006548">
    <property type="component" value="Chromosome 5"/>
</dbReference>
<dbReference type="ExpressionAtlas" id="Q9FJW6">
    <property type="expression patterns" value="baseline and differential"/>
</dbReference>
<dbReference type="GO" id="GO:0009507">
    <property type="term" value="C:chloroplast"/>
    <property type="evidence" value="ECO:0000314"/>
    <property type="project" value="TAIR"/>
</dbReference>
<dbReference type="GO" id="GO:0009658">
    <property type="term" value="P:chloroplast organization"/>
    <property type="evidence" value="ECO:0000315"/>
    <property type="project" value="TAIR"/>
</dbReference>
<dbReference type="GO" id="GO:0042793">
    <property type="term" value="P:plastid transcription"/>
    <property type="evidence" value="ECO:0000315"/>
    <property type="project" value="UniProtKB"/>
</dbReference>
<dbReference type="FunFam" id="1.25.40.10:FF:001552">
    <property type="entry name" value="Predicted protein"/>
    <property type="match status" value="1"/>
</dbReference>
<dbReference type="Gene3D" id="1.25.40.10">
    <property type="entry name" value="Tetratricopeptide repeat domain"/>
    <property type="match status" value="3"/>
</dbReference>
<dbReference type="InterPro" id="IPR044645">
    <property type="entry name" value="DG1/EMB2279-like"/>
</dbReference>
<dbReference type="InterPro" id="IPR002885">
    <property type="entry name" value="Pentatricopeptide_rpt"/>
</dbReference>
<dbReference type="InterPro" id="IPR011990">
    <property type="entry name" value="TPR-like_helical_dom_sf"/>
</dbReference>
<dbReference type="NCBIfam" id="TIGR00756">
    <property type="entry name" value="PPR"/>
    <property type="match status" value="1"/>
</dbReference>
<dbReference type="PANTHER" id="PTHR46935">
    <property type="entry name" value="OS01G0674700 PROTEIN"/>
    <property type="match status" value="1"/>
</dbReference>
<dbReference type="PANTHER" id="PTHR46935:SF2">
    <property type="entry name" value="PENTACOTRIPEPTIDE-REPEAT REGION OF PRORP DOMAIN-CONTAINING PROTEIN"/>
    <property type="match status" value="1"/>
</dbReference>
<dbReference type="Pfam" id="PF01535">
    <property type="entry name" value="PPR"/>
    <property type="match status" value="3"/>
</dbReference>
<dbReference type="Pfam" id="PF13041">
    <property type="entry name" value="PPR_2"/>
    <property type="match status" value="1"/>
</dbReference>
<dbReference type="Pfam" id="PF13812">
    <property type="entry name" value="PPR_3"/>
    <property type="match status" value="1"/>
</dbReference>
<dbReference type="PROSITE" id="PS51375">
    <property type="entry name" value="PPR"/>
    <property type="match status" value="10"/>
</dbReference>
<protein>
    <recommendedName>
        <fullName>Pentatricopeptide repeat-containing protein At5g67570, chloroplastic</fullName>
    </recommendedName>
    <alternativeName>
        <fullName>Protein DELAYED GREENING 1</fullName>
    </alternativeName>
    <alternativeName>
        <fullName>Protein EMBRYO DEFECTIVE 1408</fullName>
    </alternativeName>
</protein>
<reference key="1">
    <citation type="journal article" date="2008" name="Plant Physiol.">
        <title>The pentratricopeptide repeat protein DELAYED GREENING1 is involved in the regulation of early chloroplast development and chloroplast gene expression in Arabidopsis.</title>
        <authorList>
            <person name="Chi W."/>
            <person name="Ma J."/>
            <person name="Zhang D."/>
            <person name="Guo J."/>
            <person name="Chen F."/>
            <person name="Lu C."/>
            <person name="Zhang L."/>
        </authorList>
    </citation>
    <scope>NUCLEOTIDE SEQUENCE [MRNA]</scope>
    <scope>SUBCELLULAR LOCATION</scope>
    <scope>DEVELOPMENTAL STAGE</scope>
    <scope>FUNCTION</scope>
</reference>
<reference key="2">
    <citation type="journal article" date="1998" name="DNA Res.">
        <title>Structural analysis of Arabidopsis thaliana chromosome 5. VI. Sequence features of the regions of 1,367,185 bp covered by 19 physically assigned P1 and TAC clones.</title>
        <authorList>
            <person name="Kotani H."/>
            <person name="Nakamura Y."/>
            <person name="Sato S."/>
            <person name="Asamizu E."/>
            <person name="Kaneko T."/>
            <person name="Miyajima N."/>
            <person name="Tabata S."/>
        </authorList>
    </citation>
    <scope>NUCLEOTIDE SEQUENCE [LARGE SCALE GENOMIC DNA]</scope>
    <source>
        <strain>cv. Columbia</strain>
    </source>
</reference>
<reference key="3">
    <citation type="journal article" date="2017" name="Plant J.">
        <title>Araport11: a complete reannotation of the Arabidopsis thaliana reference genome.</title>
        <authorList>
            <person name="Cheng C.Y."/>
            <person name="Krishnakumar V."/>
            <person name="Chan A.P."/>
            <person name="Thibaud-Nissen F."/>
            <person name="Schobel S."/>
            <person name="Town C.D."/>
        </authorList>
    </citation>
    <scope>GENOME REANNOTATION</scope>
    <source>
        <strain>cv. Columbia</strain>
    </source>
</reference>
<reference key="4">
    <citation type="submission" date="2005-03" db="EMBL/GenBank/DDBJ databases">
        <title>Large-scale analysis of RIKEN Arabidopsis full-length (RAFL) cDNAs.</title>
        <authorList>
            <person name="Totoki Y."/>
            <person name="Seki M."/>
            <person name="Ishida J."/>
            <person name="Nakajima M."/>
            <person name="Enju A."/>
            <person name="Kamiya A."/>
            <person name="Narusaka M."/>
            <person name="Shin-i T."/>
            <person name="Nakagawa M."/>
            <person name="Sakamoto N."/>
            <person name="Oishi K."/>
            <person name="Kohara Y."/>
            <person name="Kobayashi M."/>
            <person name="Toyoda A."/>
            <person name="Sakaki Y."/>
            <person name="Sakurai T."/>
            <person name="Iida K."/>
            <person name="Akiyama K."/>
            <person name="Satou M."/>
            <person name="Toyoda T."/>
            <person name="Konagaya A."/>
            <person name="Carninci P."/>
            <person name="Kawai J."/>
            <person name="Hayashizaki Y."/>
            <person name="Shinozaki K."/>
        </authorList>
    </citation>
    <scope>NUCLEOTIDE SEQUENCE [LARGE SCALE MRNA] OF 363-798</scope>
    <source>
        <strain>cv. Columbia</strain>
    </source>
</reference>
<reference key="5">
    <citation type="journal article" date="2004" name="Plant Cell">
        <title>Genome-wide analysis of Arabidopsis pentatricopeptide repeat proteins reveals their essential role in organelle biogenesis.</title>
        <authorList>
            <person name="Lurin C."/>
            <person name="Andres C."/>
            <person name="Aubourg S."/>
            <person name="Bellaoui M."/>
            <person name="Bitton F."/>
            <person name="Bruyere C."/>
            <person name="Caboche M."/>
            <person name="Debast C."/>
            <person name="Gualberto J."/>
            <person name="Hoffmann B."/>
            <person name="Lecharny A."/>
            <person name="Le Ret M."/>
            <person name="Martin-Magniette M.-L."/>
            <person name="Mireau H."/>
            <person name="Peeters N."/>
            <person name="Renou J.-P."/>
            <person name="Szurek B."/>
            <person name="Taconnat L."/>
            <person name="Small I."/>
        </authorList>
    </citation>
    <scope>GENE FAMILY</scope>
</reference>
<reference key="6">
    <citation type="journal article" date="2010" name="Plant J.">
        <title>Interaction of the pentatricopeptide-repeat protein DELAYED GREENING 1 with sigma factor SIG6 in the regulation of chloroplast gene expression in Arabidopsis cotyledons.</title>
        <authorList>
            <person name="Chi W."/>
            <person name="Mao J."/>
            <person name="Li Q."/>
            <person name="Ji D."/>
            <person name="Zou M."/>
            <person name="Lu C."/>
            <person name="Zhang L."/>
        </authorList>
    </citation>
    <scope>FUNCTION</scope>
    <scope>INTERACTION WITH SIGF</scope>
</reference>
<proteinExistence type="evidence at protein level"/>
<name>PP451_ARATH</name>
<evidence type="ECO:0000255" key="1"/>
<evidence type="ECO:0000256" key="2">
    <source>
        <dbReference type="SAM" id="MobiDB-lite"/>
    </source>
</evidence>
<evidence type="ECO:0000269" key="3">
    <source>
    </source>
</evidence>
<evidence type="ECO:0000269" key="4">
    <source>
    </source>
</evidence>
<evidence type="ECO:0000305" key="5"/>
<feature type="transit peptide" description="Chloroplast" evidence="1">
    <location>
        <begin position="1"/>
        <end status="unknown"/>
    </location>
</feature>
<feature type="chain" id="PRO_0000363588" description="Pentatricopeptide repeat-containing protein At5g67570, chloroplastic">
    <location>
        <begin status="unknown"/>
        <end position="798"/>
    </location>
</feature>
<feature type="repeat" description="PPR 1">
    <location>
        <begin position="254"/>
        <end position="284"/>
    </location>
</feature>
<feature type="repeat" description="PPR 2">
    <location>
        <begin position="290"/>
        <end position="324"/>
    </location>
</feature>
<feature type="repeat" description="PPR 3">
    <location>
        <begin position="340"/>
        <end position="374"/>
    </location>
</feature>
<feature type="repeat" description="PPR 4">
    <location>
        <begin position="375"/>
        <end position="409"/>
    </location>
</feature>
<feature type="repeat" description="PPR 5">
    <location>
        <begin position="410"/>
        <end position="444"/>
    </location>
</feature>
<feature type="repeat" description="PPR 6">
    <location>
        <begin position="445"/>
        <end position="480"/>
    </location>
</feature>
<feature type="repeat" description="PPR 7">
    <location>
        <begin position="481"/>
        <end position="511"/>
    </location>
</feature>
<feature type="repeat" description="PPR 8">
    <location>
        <begin position="515"/>
        <end position="545"/>
    </location>
</feature>
<feature type="repeat" description="PPR 9">
    <location>
        <begin position="553"/>
        <end position="587"/>
    </location>
</feature>
<feature type="repeat" description="PPR 10">
    <location>
        <begin position="588"/>
        <end position="622"/>
    </location>
</feature>
<feature type="region of interest" description="Disordered" evidence="2">
    <location>
        <begin position="1"/>
        <end position="21"/>
    </location>
</feature>
<feature type="region of interest" description="Disordered" evidence="2">
    <location>
        <begin position="50"/>
        <end position="73"/>
    </location>
</feature>
<organism>
    <name type="scientific">Arabidopsis thaliana</name>
    <name type="common">Mouse-ear cress</name>
    <dbReference type="NCBI Taxonomy" id="3702"/>
    <lineage>
        <taxon>Eukaryota</taxon>
        <taxon>Viridiplantae</taxon>
        <taxon>Streptophyta</taxon>
        <taxon>Embryophyta</taxon>
        <taxon>Tracheophyta</taxon>
        <taxon>Spermatophyta</taxon>
        <taxon>Magnoliopsida</taxon>
        <taxon>eudicotyledons</taxon>
        <taxon>Gunneridae</taxon>
        <taxon>Pentapetalae</taxon>
        <taxon>rosids</taxon>
        <taxon>malvids</taxon>
        <taxon>Brassicales</taxon>
        <taxon>Brassicaceae</taxon>
        <taxon>Camelineae</taxon>
        <taxon>Arabidopsis</taxon>
    </lineage>
</organism>
<accession>Q9FJW6</accession>
<accession>Q56WD0</accession>